<protein>
    <recommendedName>
        <fullName>Chymosin</fullName>
        <ecNumber>3.4.23.4</ecNumber>
    </recommendedName>
    <alternativeName>
        <fullName>Preprorennin</fullName>
    </alternativeName>
</protein>
<dbReference type="EC" id="3.4.23.4"/>
<dbReference type="EMBL" id="X53037">
    <property type="protein sequence ID" value="CAA37209.1"/>
    <property type="molecule type" value="mRNA"/>
</dbReference>
<dbReference type="PIR" id="S10996">
    <property type="entry name" value="CMSHB"/>
</dbReference>
<dbReference type="RefSeq" id="NP_001009804.1">
    <property type="nucleotide sequence ID" value="NM_001009804.1"/>
</dbReference>
<dbReference type="SMR" id="P18276"/>
<dbReference type="STRING" id="9940.ENSOARP00000020902"/>
<dbReference type="MEROPS" id="A01.006"/>
<dbReference type="PaxDb" id="9940-ENSOARP00000020902"/>
<dbReference type="Ensembl" id="ENSOART00215070714">
    <property type="protein sequence ID" value="ENSOARP00215037868"/>
    <property type="gene ID" value="ENSOARG00215041928"/>
</dbReference>
<dbReference type="GeneID" id="443399"/>
<dbReference type="KEGG" id="oas:443399"/>
<dbReference type="CTD" id="229697"/>
<dbReference type="eggNOG" id="KOG1339">
    <property type="taxonomic scope" value="Eukaryota"/>
</dbReference>
<dbReference type="OrthoDB" id="771136at2759"/>
<dbReference type="Proteomes" id="UP000002356">
    <property type="component" value="Unplaced"/>
</dbReference>
<dbReference type="GO" id="GO:0004190">
    <property type="term" value="F:aspartic-type endopeptidase activity"/>
    <property type="evidence" value="ECO:0007669"/>
    <property type="project" value="UniProtKB-KW"/>
</dbReference>
<dbReference type="GO" id="GO:0007586">
    <property type="term" value="P:digestion"/>
    <property type="evidence" value="ECO:0007669"/>
    <property type="project" value="UniProtKB-KW"/>
</dbReference>
<dbReference type="GO" id="GO:0006508">
    <property type="term" value="P:proteolysis"/>
    <property type="evidence" value="ECO:0007669"/>
    <property type="project" value="UniProtKB-KW"/>
</dbReference>
<dbReference type="CDD" id="cd05478">
    <property type="entry name" value="pepsin_A"/>
    <property type="match status" value="1"/>
</dbReference>
<dbReference type="FunFam" id="2.40.70.10:FF:000006">
    <property type="entry name" value="Cathepsin E"/>
    <property type="match status" value="1"/>
</dbReference>
<dbReference type="FunFam" id="2.40.70.10:FF:000004">
    <property type="entry name" value="Pepsin A"/>
    <property type="match status" value="1"/>
</dbReference>
<dbReference type="Gene3D" id="6.10.140.60">
    <property type="match status" value="1"/>
</dbReference>
<dbReference type="Gene3D" id="2.40.70.10">
    <property type="entry name" value="Acid Proteases"/>
    <property type="match status" value="2"/>
</dbReference>
<dbReference type="InterPro" id="IPR001461">
    <property type="entry name" value="Aspartic_peptidase_A1"/>
</dbReference>
<dbReference type="InterPro" id="IPR001969">
    <property type="entry name" value="Aspartic_peptidase_AS"/>
</dbReference>
<dbReference type="InterPro" id="IPR012848">
    <property type="entry name" value="Aspartic_peptidase_N"/>
</dbReference>
<dbReference type="InterPro" id="IPR034162">
    <property type="entry name" value="Pepsin_A"/>
</dbReference>
<dbReference type="InterPro" id="IPR033121">
    <property type="entry name" value="PEPTIDASE_A1"/>
</dbReference>
<dbReference type="InterPro" id="IPR021109">
    <property type="entry name" value="Peptidase_aspartic_dom_sf"/>
</dbReference>
<dbReference type="PANTHER" id="PTHR47966">
    <property type="entry name" value="BETA-SITE APP-CLEAVING ENZYME, ISOFORM A-RELATED"/>
    <property type="match status" value="1"/>
</dbReference>
<dbReference type="PANTHER" id="PTHR47966:SF13">
    <property type="entry name" value="CHYMOSIN"/>
    <property type="match status" value="1"/>
</dbReference>
<dbReference type="Pfam" id="PF07966">
    <property type="entry name" value="A1_Propeptide"/>
    <property type="match status" value="1"/>
</dbReference>
<dbReference type="Pfam" id="PF00026">
    <property type="entry name" value="Asp"/>
    <property type="match status" value="1"/>
</dbReference>
<dbReference type="PRINTS" id="PR00792">
    <property type="entry name" value="PEPSIN"/>
</dbReference>
<dbReference type="SUPFAM" id="SSF50630">
    <property type="entry name" value="Acid proteases"/>
    <property type="match status" value="1"/>
</dbReference>
<dbReference type="PROSITE" id="PS00141">
    <property type="entry name" value="ASP_PROTEASE"/>
    <property type="match status" value="2"/>
</dbReference>
<dbReference type="PROSITE" id="PS51767">
    <property type="entry name" value="PEPTIDASE_A1"/>
    <property type="match status" value="1"/>
</dbReference>
<comment type="function">
    <text>Chymosin is synthesized in the mucosa of the stomach. The enzyme hydrolyzes casein to paracasein.</text>
</comment>
<comment type="catalytic activity">
    <reaction>
        <text>Broad specificity similar to that of pepsin A. Clots milk by cleavage of a single 104-Ser-Phe-|-Met-Ala-107 bond in kappa-chain of casein.</text>
        <dbReference type="EC" id="3.4.23.4"/>
    </reaction>
</comment>
<comment type="subunit">
    <text>Monomer.</text>
</comment>
<comment type="similarity">
    <text evidence="4">Belongs to the peptidase A1 family.</text>
</comment>
<name>CHYM_SHEEP</name>
<sequence>MRCLVVLLAVFALSQGAEITRIPLYKGKPLRKALKERGLLEDFLQKQQYGVSSEYSGFGEVASVPLTNYLDSQYFGKIYLGTPPQEFTVLFDTGSSDFWVPSIYCKSNACKNHQRFDPRKSSTFQNLGKPLSIRYGTGSMQGILGYDTVTVSNIVDIQQTVGLSTQEPGDVFTYAEFDGILGMAYPSLASEYSVPVFDNMMDRRLVAQDLFSVYMDRSGQGSMLTLGAIDPSYYTGSLHWVPVTLQKYWQFTVDSVTISGAVVACEGGCQAILDTGTSKLVGPSSDILNIQQAIGATQNQYGEFDIDCDSLSSMPTVVFEINGKMYPLTPYAYTSQEEGFCTSGFQGENHSHQWILGDVFIREYYSVFDRANNLVGLAKAI</sequence>
<organism>
    <name type="scientific">Ovis aries</name>
    <name type="common">Sheep</name>
    <dbReference type="NCBI Taxonomy" id="9940"/>
    <lineage>
        <taxon>Eukaryota</taxon>
        <taxon>Metazoa</taxon>
        <taxon>Chordata</taxon>
        <taxon>Craniata</taxon>
        <taxon>Vertebrata</taxon>
        <taxon>Euteleostomi</taxon>
        <taxon>Mammalia</taxon>
        <taxon>Eutheria</taxon>
        <taxon>Laurasiatheria</taxon>
        <taxon>Artiodactyla</taxon>
        <taxon>Ruminantia</taxon>
        <taxon>Pecora</taxon>
        <taxon>Bovidae</taxon>
        <taxon>Caprinae</taxon>
        <taxon>Ovis</taxon>
    </lineage>
</organism>
<feature type="signal peptide">
    <location>
        <begin position="1"/>
        <end position="16"/>
    </location>
</feature>
<feature type="propeptide" id="PRO_0000025994" description="Activation peptide">
    <location>
        <begin position="17"/>
        <end position="58"/>
    </location>
</feature>
<feature type="chain" id="PRO_0000025995" description="Chymosin">
    <location>
        <begin position="59"/>
        <end position="381"/>
    </location>
</feature>
<feature type="domain" description="Peptidase A1" evidence="2">
    <location>
        <begin position="74"/>
        <end position="378"/>
    </location>
</feature>
<feature type="active site" evidence="3">
    <location>
        <position position="92"/>
    </location>
</feature>
<feature type="active site" evidence="3">
    <location>
        <position position="274"/>
    </location>
</feature>
<feature type="disulfide bond" evidence="1">
    <location>
        <begin position="105"/>
        <end position="110"/>
    </location>
</feature>
<feature type="disulfide bond" evidence="1">
    <location>
        <begin position="265"/>
        <end position="269"/>
    </location>
</feature>
<feature type="disulfide bond" evidence="1">
    <location>
        <begin position="308"/>
        <end position="341"/>
    </location>
</feature>
<accession>P18276</accession>
<reference key="1">
    <citation type="journal article" date="1990" name="Nucleic Acids Res.">
        <title>Complete primary structure of lamb preprochymosin deduced from cDNA.</title>
        <authorList>
            <person name="Pungecar J."/>
            <person name="Strukelj B."/>
            <person name="Gubensek F."/>
            <person name="Turk V."/>
            <person name="Kregar I."/>
        </authorList>
    </citation>
    <scope>NUCLEOTIDE SEQUENCE [MRNA]</scope>
</reference>
<evidence type="ECO:0000250" key="1"/>
<evidence type="ECO:0000255" key="2">
    <source>
        <dbReference type="PROSITE-ProRule" id="PRU01103"/>
    </source>
</evidence>
<evidence type="ECO:0000255" key="3">
    <source>
        <dbReference type="PROSITE-ProRule" id="PRU10094"/>
    </source>
</evidence>
<evidence type="ECO:0000305" key="4"/>
<proteinExistence type="evidence at transcript level"/>
<gene>
    <name type="primary">CYM</name>
</gene>
<keyword id="KW-0064">Aspartyl protease</keyword>
<keyword id="KW-0222">Digestion</keyword>
<keyword id="KW-1015">Disulfide bond</keyword>
<keyword id="KW-0378">Hydrolase</keyword>
<keyword id="KW-0645">Protease</keyword>
<keyword id="KW-1185">Reference proteome</keyword>
<keyword id="KW-0732">Signal</keyword>
<keyword id="KW-0865">Zymogen</keyword>